<proteinExistence type="inferred from homology"/>
<reference key="1">
    <citation type="submission" date="2007-10" db="EMBL/GenBank/DDBJ databases">
        <title>Complete sequence of Salinispora arenicola CNS-205.</title>
        <authorList>
            <consortium name="US DOE Joint Genome Institute"/>
            <person name="Copeland A."/>
            <person name="Lucas S."/>
            <person name="Lapidus A."/>
            <person name="Barry K."/>
            <person name="Glavina del Rio T."/>
            <person name="Dalin E."/>
            <person name="Tice H."/>
            <person name="Pitluck S."/>
            <person name="Foster B."/>
            <person name="Schmutz J."/>
            <person name="Larimer F."/>
            <person name="Land M."/>
            <person name="Hauser L."/>
            <person name="Kyrpides N."/>
            <person name="Ivanova N."/>
            <person name="Jensen P.R."/>
            <person name="Moore B.S."/>
            <person name="Penn K."/>
            <person name="Jenkins C."/>
            <person name="Udwary D."/>
            <person name="Xiang L."/>
            <person name="Gontang E."/>
            <person name="Richardson P."/>
        </authorList>
    </citation>
    <scope>NUCLEOTIDE SEQUENCE [LARGE SCALE GENOMIC DNA]</scope>
    <source>
        <strain>CNS-205</strain>
    </source>
</reference>
<feature type="chain" id="PRO_0000332071" description="Chaperonin GroEL 2">
    <location>
        <begin position="1"/>
        <end position="545"/>
    </location>
</feature>
<feature type="region of interest" description="Disordered" evidence="2">
    <location>
        <begin position="526"/>
        <end position="545"/>
    </location>
</feature>
<feature type="compositionally biased region" description="Basic residues" evidence="2">
    <location>
        <begin position="534"/>
        <end position="545"/>
    </location>
</feature>
<feature type="binding site" evidence="1">
    <location>
        <begin position="29"/>
        <end position="32"/>
    </location>
    <ligand>
        <name>ATP</name>
        <dbReference type="ChEBI" id="CHEBI:30616"/>
    </ligand>
</feature>
<feature type="binding site" evidence="1">
    <location>
        <begin position="86"/>
        <end position="90"/>
    </location>
    <ligand>
        <name>ATP</name>
        <dbReference type="ChEBI" id="CHEBI:30616"/>
    </ligand>
</feature>
<feature type="binding site" evidence="1">
    <location>
        <position position="413"/>
    </location>
    <ligand>
        <name>ATP</name>
        <dbReference type="ChEBI" id="CHEBI:30616"/>
    </ligand>
</feature>
<feature type="binding site" evidence="1">
    <location>
        <begin position="477"/>
        <end position="479"/>
    </location>
    <ligand>
        <name>ATP</name>
        <dbReference type="ChEBI" id="CHEBI:30616"/>
    </ligand>
</feature>
<feature type="binding site" evidence="1">
    <location>
        <position position="493"/>
    </location>
    <ligand>
        <name>ATP</name>
        <dbReference type="ChEBI" id="CHEBI:30616"/>
    </ligand>
</feature>
<comment type="function">
    <text evidence="1">Together with its co-chaperonin GroES, plays an essential role in assisting protein folding. The GroEL-GroES system forms a nano-cage that allows encapsulation of the non-native substrate proteins and provides a physical environment optimized to promote and accelerate protein folding.</text>
</comment>
<comment type="catalytic activity">
    <reaction evidence="1">
        <text>ATP + H2O + a folded polypeptide = ADP + phosphate + an unfolded polypeptide.</text>
        <dbReference type="EC" id="5.6.1.7"/>
    </reaction>
</comment>
<comment type="subunit">
    <text evidence="1">Forms a cylinder of 14 subunits composed of two heptameric rings stacked back-to-back. Interacts with the co-chaperonin GroES.</text>
</comment>
<comment type="subcellular location">
    <subcellularLocation>
        <location evidence="1">Cytoplasm</location>
    </subcellularLocation>
</comment>
<comment type="similarity">
    <text evidence="1">Belongs to the chaperonin (HSP60) family.</text>
</comment>
<sequence>MAKILSFSDDARHQLEHGVNALADAVKVTLGPRGRNVVLDKKFGAPTITNDGVTIAKEIELTNPYENLGAQLVKEVATKTNDVAGDGTTTATVLAQALVREGLRNVAAGANPTGLKRGIDAAATKVSEELLGKAVDVSDKAAIAHVATVSAQDSTIGELIAEAMERVGRDGVITVEEGSTLATELDVTEGLQFDKGFISPNFVTDAEGQESVLEDAYILITTQKISAIEELLPLLEKVLQESKPLLIIAEDVEGQALSTLVVNALRKTMKVCAVKAPGFGDRRKAMLQDMAILTGAELVAPELGYKLDQVGLEVLGTARRVVVDKENTTIVDGGGQASDAEDRVAQIRKEIEASDSEWDREKLAERLAKLSGGIAVIRAGAATEVEMKERKHRIEDAIAATKAAVEEGTVPGGGAALAQVLPALDGDLGLTGDEQVGVSIVRKALIEPLRWIAQNAGHDGYVVVQKVAGKDWGHGLDAATGEYVDLAKAGILDPVKVTRNAVANAASIAGLLLTTESLVVEKPQEPEPAAAGHGHGHGHQHGPGF</sequence>
<gene>
    <name evidence="1" type="primary">groEL2</name>
    <name evidence="1" type="synonym">groL2</name>
    <name type="ordered locus">Sare_4231</name>
</gene>
<organism>
    <name type="scientific">Salinispora arenicola (strain CNS-205)</name>
    <dbReference type="NCBI Taxonomy" id="391037"/>
    <lineage>
        <taxon>Bacteria</taxon>
        <taxon>Bacillati</taxon>
        <taxon>Actinomycetota</taxon>
        <taxon>Actinomycetes</taxon>
        <taxon>Micromonosporales</taxon>
        <taxon>Micromonosporaceae</taxon>
        <taxon>Salinispora</taxon>
    </lineage>
</organism>
<name>CH602_SALAI</name>
<accession>A8M497</accession>
<dbReference type="EC" id="5.6.1.7" evidence="1"/>
<dbReference type="EMBL" id="CP000850">
    <property type="protein sequence ID" value="ABW00013.1"/>
    <property type="molecule type" value="Genomic_DNA"/>
</dbReference>
<dbReference type="SMR" id="A8M497"/>
<dbReference type="STRING" id="391037.Sare_4231"/>
<dbReference type="KEGG" id="saq:Sare_4231"/>
<dbReference type="PATRIC" id="fig|391037.6.peg.4271"/>
<dbReference type="eggNOG" id="COG0459">
    <property type="taxonomic scope" value="Bacteria"/>
</dbReference>
<dbReference type="HOGENOM" id="CLU_016503_3_0_11"/>
<dbReference type="OrthoDB" id="9766614at2"/>
<dbReference type="GO" id="GO:0005737">
    <property type="term" value="C:cytoplasm"/>
    <property type="evidence" value="ECO:0007669"/>
    <property type="project" value="UniProtKB-SubCell"/>
</dbReference>
<dbReference type="GO" id="GO:0005524">
    <property type="term" value="F:ATP binding"/>
    <property type="evidence" value="ECO:0007669"/>
    <property type="project" value="UniProtKB-UniRule"/>
</dbReference>
<dbReference type="GO" id="GO:0140662">
    <property type="term" value="F:ATP-dependent protein folding chaperone"/>
    <property type="evidence" value="ECO:0007669"/>
    <property type="project" value="InterPro"/>
</dbReference>
<dbReference type="GO" id="GO:0016853">
    <property type="term" value="F:isomerase activity"/>
    <property type="evidence" value="ECO:0007669"/>
    <property type="project" value="UniProtKB-KW"/>
</dbReference>
<dbReference type="GO" id="GO:0051082">
    <property type="term" value="F:unfolded protein binding"/>
    <property type="evidence" value="ECO:0007669"/>
    <property type="project" value="UniProtKB-UniRule"/>
</dbReference>
<dbReference type="GO" id="GO:0042026">
    <property type="term" value="P:protein refolding"/>
    <property type="evidence" value="ECO:0007669"/>
    <property type="project" value="UniProtKB-UniRule"/>
</dbReference>
<dbReference type="CDD" id="cd03344">
    <property type="entry name" value="GroEL"/>
    <property type="match status" value="1"/>
</dbReference>
<dbReference type="FunFam" id="3.50.7.10:FF:000001">
    <property type="entry name" value="60 kDa chaperonin"/>
    <property type="match status" value="1"/>
</dbReference>
<dbReference type="Gene3D" id="3.50.7.10">
    <property type="entry name" value="GroEL"/>
    <property type="match status" value="1"/>
</dbReference>
<dbReference type="Gene3D" id="1.10.560.10">
    <property type="entry name" value="GroEL-like equatorial domain"/>
    <property type="match status" value="1"/>
</dbReference>
<dbReference type="Gene3D" id="3.30.260.10">
    <property type="entry name" value="TCP-1-like chaperonin intermediate domain"/>
    <property type="match status" value="1"/>
</dbReference>
<dbReference type="HAMAP" id="MF_00600">
    <property type="entry name" value="CH60"/>
    <property type="match status" value="1"/>
</dbReference>
<dbReference type="InterPro" id="IPR018370">
    <property type="entry name" value="Chaperonin_Cpn60_CS"/>
</dbReference>
<dbReference type="InterPro" id="IPR001844">
    <property type="entry name" value="Cpn60/GroEL"/>
</dbReference>
<dbReference type="InterPro" id="IPR002423">
    <property type="entry name" value="Cpn60/GroEL/TCP-1"/>
</dbReference>
<dbReference type="InterPro" id="IPR027409">
    <property type="entry name" value="GroEL-like_apical_dom_sf"/>
</dbReference>
<dbReference type="InterPro" id="IPR027413">
    <property type="entry name" value="GROEL-like_equatorial_sf"/>
</dbReference>
<dbReference type="InterPro" id="IPR027410">
    <property type="entry name" value="TCP-1-like_intermed_sf"/>
</dbReference>
<dbReference type="NCBIfam" id="TIGR02348">
    <property type="entry name" value="GroEL"/>
    <property type="match status" value="1"/>
</dbReference>
<dbReference type="NCBIfam" id="NF000592">
    <property type="entry name" value="PRK00013.1"/>
    <property type="match status" value="1"/>
</dbReference>
<dbReference type="NCBIfam" id="NF009487">
    <property type="entry name" value="PRK12849.1"/>
    <property type="match status" value="1"/>
</dbReference>
<dbReference type="NCBIfam" id="NF009488">
    <property type="entry name" value="PRK12850.1"/>
    <property type="match status" value="1"/>
</dbReference>
<dbReference type="NCBIfam" id="NF009489">
    <property type="entry name" value="PRK12851.1"/>
    <property type="match status" value="1"/>
</dbReference>
<dbReference type="PANTHER" id="PTHR45633">
    <property type="entry name" value="60 KDA HEAT SHOCK PROTEIN, MITOCHONDRIAL"/>
    <property type="match status" value="1"/>
</dbReference>
<dbReference type="Pfam" id="PF00118">
    <property type="entry name" value="Cpn60_TCP1"/>
    <property type="match status" value="1"/>
</dbReference>
<dbReference type="PRINTS" id="PR00298">
    <property type="entry name" value="CHAPERONIN60"/>
</dbReference>
<dbReference type="SUPFAM" id="SSF52029">
    <property type="entry name" value="GroEL apical domain-like"/>
    <property type="match status" value="1"/>
</dbReference>
<dbReference type="SUPFAM" id="SSF48592">
    <property type="entry name" value="GroEL equatorial domain-like"/>
    <property type="match status" value="1"/>
</dbReference>
<dbReference type="SUPFAM" id="SSF54849">
    <property type="entry name" value="GroEL-intermediate domain like"/>
    <property type="match status" value="1"/>
</dbReference>
<dbReference type="PROSITE" id="PS00296">
    <property type="entry name" value="CHAPERONINS_CPN60"/>
    <property type="match status" value="1"/>
</dbReference>
<evidence type="ECO:0000255" key="1">
    <source>
        <dbReference type="HAMAP-Rule" id="MF_00600"/>
    </source>
</evidence>
<evidence type="ECO:0000256" key="2">
    <source>
        <dbReference type="SAM" id="MobiDB-lite"/>
    </source>
</evidence>
<keyword id="KW-0067">ATP-binding</keyword>
<keyword id="KW-0143">Chaperone</keyword>
<keyword id="KW-0963">Cytoplasm</keyword>
<keyword id="KW-0413">Isomerase</keyword>
<keyword id="KW-0547">Nucleotide-binding</keyword>
<protein>
    <recommendedName>
        <fullName evidence="1">Chaperonin GroEL 2</fullName>
        <ecNumber evidence="1">5.6.1.7</ecNumber>
    </recommendedName>
    <alternativeName>
        <fullName evidence="1">60 kDa chaperonin 2</fullName>
    </alternativeName>
    <alternativeName>
        <fullName evidence="1">Chaperonin-60 2</fullName>
        <shortName evidence="1">Cpn60 2</shortName>
    </alternativeName>
</protein>